<organism>
    <name type="scientific">Rhodopseudomonas palustris (strain BisB5)</name>
    <dbReference type="NCBI Taxonomy" id="316057"/>
    <lineage>
        <taxon>Bacteria</taxon>
        <taxon>Pseudomonadati</taxon>
        <taxon>Pseudomonadota</taxon>
        <taxon>Alphaproteobacteria</taxon>
        <taxon>Hyphomicrobiales</taxon>
        <taxon>Nitrobacteraceae</taxon>
        <taxon>Rhodopseudomonas</taxon>
    </lineage>
</organism>
<protein>
    <recommendedName>
        <fullName evidence="1">Transcriptional repressor NrdR</fullName>
    </recommendedName>
</protein>
<name>NRDR_RHOPS</name>
<keyword id="KW-0067">ATP-binding</keyword>
<keyword id="KW-0238">DNA-binding</keyword>
<keyword id="KW-0479">Metal-binding</keyword>
<keyword id="KW-0547">Nucleotide-binding</keyword>
<keyword id="KW-0678">Repressor</keyword>
<keyword id="KW-0804">Transcription</keyword>
<keyword id="KW-0805">Transcription regulation</keyword>
<keyword id="KW-0862">Zinc</keyword>
<keyword id="KW-0863">Zinc-finger</keyword>
<reference key="1">
    <citation type="submission" date="2006-03" db="EMBL/GenBank/DDBJ databases">
        <title>Complete sequence of Rhodopseudomonas palustris BisB5.</title>
        <authorList>
            <consortium name="US DOE Joint Genome Institute"/>
            <person name="Copeland A."/>
            <person name="Lucas S."/>
            <person name="Lapidus A."/>
            <person name="Barry K."/>
            <person name="Detter J.C."/>
            <person name="Glavina del Rio T."/>
            <person name="Hammon N."/>
            <person name="Israni S."/>
            <person name="Dalin E."/>
            <person name="Tice H."/>
            <person name="Pitluck S."/>
            <person name="Chain P."/>
            <person name="Malfatti S."/>
            <person name="Shin M."/>
            <person name="Vergez L."/>
            <person name="Schmutz J."/>
            <person name="Larimer F."/>
            <person name="Land M."/>
            <person name="Hauser L."/>
            <person name="Pelletier D.A."/>
            <person name="Kyrpides N."/>
            <person name="Lykidis A."/>
            <person name="Oda Y."/>
            <person name="Harwood C.S."/>
            <person name="Richardson P."/>
        </authorList>
    </citation>
    <scope>NUCLEOTIDE SEQUENCE [LARGE SCALE GENOMIC DNA]</scope>
    <source>
        <strain>BisB5</strain>
    </source>
</reference>
<accession>Q136T8</accession>
<dbReference type="EMBL" id="CP000283">
    <property type="protein sequence ID" value="ABE39901.1"/>
    <property type="molecule type" value="Genomic_DNA"/>
</dbReference>
<dbReference type="SMR" id="Q136T8"/>
<dbReference type="STRING" id="316057.RPD_2672"/>
<dbReference type="KEGG" id="rpd:RPD_2672"/>
<dbReference type="eggNOG" id="COG1327">
    <property type="taxonomic scope" value="Bacteria"/>
</dbReference>
<dbReference type="HOGENOM" id="CLU_108412_0_1_5"/>
<dbReference type="BioCyc" id="RPAL316057:RPD_RS13435-MONOMER"/>
<dbReference type="Proteomes" id="UP000001818">
    <property type="component" value="Chromosome"/>
</dbReference>
<dbReference type="GO" id="GO:0005524">
    <property type="term" value="F:ATP binding"/>
    <property type="evidence" value="ECO:0007669"/>
    <property type="project" value="UniProtKB-KW"/>
</dbReference>
<dbReference type="GO" id="GO:0003677">
    <property type="term" value="F:DNA binding"/>
    <property type="evidence" value="ECO:0007669"/>
    <property type="project" value="UniProtKB-KW"/>
</dbReference>
<dbReference type="GO" id="GO:0008270">
    <property type="term" value="F:zinc ion binding"/>
    <property type="evidence" value="ECO:0007669"/>
    <property type="project" value="UniProtKB-UniRule"/>
</dbReference>
<dbReference type="GO" id="GO:0045892">
    <property type="term" value="P:negative regulation of DNA-templated transcription"/>
    <property type="evidence" value="ECO:0007669"/>
    <property type="project" value="UniProtKB-UniRule"/>
</dbReference>
<dbReference type="HAMAP" id="MF_00440">
    <property type="entry name" value="NrdR"/>
    <property type="match status" value="1"/>
</dbReference>
<dbReference type="InterPro" id="IPR005144">
    <property type="entry name" value="ATP-cone_dom"/>
</dbReference>
<dbReference type="InterPro" id="IPR055173">
    <property type="entry name" value="NrdR-like_N"/>
</dbReference>
<dbReference type="InterPro" id="IPR003796">
    <property type="entry name" value="RNR_NrdR-like"/>
</dbReference>
<dbReference type="NCBIfam" id="TIGR00244">
    <property type="entry name" value="transcriptional regulator NrdR"/>
    <property type="match status" value="1"/>
</dbReference>
<dbReference type="PANTHER" id="PTHR30455">
    <property type="entry name" value="TRANSCRIPTIONAL REPRESSOR NRDR"/>
    <property type="match status" value="1"/>
</dbReference>
<dbReference type="PANTHER" id="PTHR30455:SF2">
    <property type="entry name" value="TRANSCRIPTIONAL REPRESSOR NRDR"/>
    <property type="match status" value="1"/>
</dbReference>
<dbReference type="Pfam" id="PF03477">
    <property type="entry name" value="ATP-cone"/>
    <property type="match status" value="1"/>
</dbReference>
<dbReference type="Pfam" id="PF22811">
    <property type="entry name" value="Zn_ribbon_NrdR"/>
    <property type="match status" value="1"/>
</dbReference>
<dbReference type="PROSITE" id="PS51161">
    <property type="entry name" value="ATP_CONE"/>
    <property type="match status" value="1"/>
</dbReference>
<sequence length="160" mass="18585">MRCPNCNSLDTQVKDSRPTEDSSVIRRRRVCIACNFRFTTFERVQLRELTVIKRNGRRVPFDRDKLVRSVQISLRKRPVEPERVEQLVSAIVRELESSGEADISSETIGEIVMDHLRKLDDVAYVRFASVYRNFREAKDFEAVLGELSGEEEARPTLVRK</sequence>
<feature type="chain" id="PRO_0000264203" description="Transcriptional repressor NrdR">
    <location>
        <begin position="1"/>
        <end position="160"/>
    </location>
</feature>
<feature type="domain" description="ATP-cone" evidence="1">
    <location>
        <begin position="49"/>
        <end position="139"/>
    </location>
</feature>
<feature type="zinc finger region" evidence="1">
    <location>
        <begin position="3"/>
        <end position="34"/>
    </location>
</feature>
<feature type="region of interest" description="Disordered" evidence="2">
    <location>
        <begin position="1"/>
        <end position="20"/>
    </location>
</feature>
<feature type="compositionally biased region" description="Polar residues" evidence="2">
    <location>
        <begin position="1"/>
        <end position="11"/>
    </location>
</feature>
<evidence type="ECO:0000255" key="1">
    <source>
        <dbReference type="HAMAP-Rule" id="MF_00440"/>
    </source>
</evidence>
<evidence type="ECO:0000256" key="2">
    <source>
        <dbReference type="SAM" id="MobiDB-lite"/>
    </source>
</evidence>
<gene>
    <name evidence="1" type="primary">nrdR</name>
    <name type="ordered locus">RPD_2672</name>
</gene>
<comment type="function">
    <text evidence="1">Negatively regulates transcription of bacterial ribonucleotide reductase nrd genes and operons by binding to NrdR-boxes.</text>
</comment>
<comment type="cofactor">
    <cofactor evidence="1">
        <name>Zn(2+)</name>
        <dbReference type="ChEBI" id="CHEBI:29105"/>
    </cofactor>
    <text evidence="1">Binds 1 zinc ion.</text>
</comment>
<comment type="similarity">
    <text evidence="1">Belongs to the NrdR family.</text>
</comment>
<proteinExistence type="inferred from homology"/>